<sequence>MTKLMVRSECMLRMVRRRPLRVQFCARWFSTKKNTAEAPRINPVGIQYLGESLQRQVFGSCGGKDEVEQSDKLMELSKKSLKDHGLWGKKTLITDPISFPLPPLQGRSLDEHFQKIGRFNSEPYKSFCEDKFTEMVARPAEWLRKPGWVKYVPGMAPVEVAYPDEELVVFDVETLYNVSDYPTLATALSSTAWYLWCSPFICGGDDPAALIPLNTLNKEQVIIGHNVAYDRARVLEEYNFRDSKAFFLDTQSLHIASFGLCSRQRPMFMKNNKKKEAEVESEVHPEISIEDYDDPWLNVSALNSLKDVAKFHCKIDLDKTDRDFFASTDKSTIIENFQKLVNYCATDVTATSQVFDEIFPVFLKKCPHPVSFAGLKSLSKCILPTKLNDWNDYLNSSESLYQQSKVQIESKIVQIIKDIVLLKDKPDFYLKDPWLSQLDWTTKPLRLTKKGVPAKCQKLPGFPEWYRQLFPSKDTVEPKITIKSRIIPILFKLSWENSPVIWSKESGWCFNVPHEQVETYKAKNYVLADSVSQEEEEIRTHNLGLQCTGVLFKVPHPNGPTFNCTNLLTKSYNHFFEKGVLKSESELAHQALQINSSGSYWMSARERIQSQFVVPSCKFPNEFQSLSAKSSLNNEKTNDLAIIIPKIVPMGTITRRAVENAWLTASNAKANRIGSELKTQVKAPPGYCFVGADVDSEELWIASLVGDSIFNVHGGTAIGWMCLEGTKNEGTDLHTKTAQILGCSRNEAKIFNYGRIYGAGAKFASQLLKRFNPSLTDEETKKIANKLYENTKGKTKRSKLFKKFWYGGSESILFNKLESIAEQETPKTPVLGCGITYSLMKKNLRANSFLPSRINWAIQSSGVDYLHLLCCSMEYIIKKYNLEARLCISIHDEIRFLVSEKDKYRAAMALQISNIWTRAMFCQQMGINELPQNCAFFSQVDIDSVIRKEVNMDCITPSNKTAIPHGEALDINQLLDKSNSKLGKPNLDIDSKVSQYAYNYREPVFEEYNKSYTPEFLKYFLAMQVQSDKRDVNRLEDEYLRECTSKEYARDGNTAEYSLLDYIKDVEKGKRTKVRIMGSNFLDGTKNAKADQRIRLPVNMPDYPTLHKIANDSAIPEKQLLENRRKKENRIDDENKKKLTRKKNTTPMERKYKRVYGGRKAFEAFYECANKPLDYTLETEKQFFNIPIDGVIDDVLNDKSNYKKKPSQARTASSSPIRKTAKAVHSKKLPARKSSTTNRNLVELERDITISREY</sequence>
<organism>
    <name type="scientific">Saccharomyces cerevisiae (strain ATCC 204508 / S288c)</name>
    <name type="common">Baker's yeast</name>
    <dbReference type="NCBI Taxonomy" id="559292"/>
    <lineage>
        <taxon>Eukaryota</taxon>
        <taxon>Fungi</taxon>
        <taxon>Dikarya</taxon>
        <taxon>Ascomycota</taxon>
        <taxon>Saccharomycotina</taxon>
        <taxon>Saccharomycetes</taxon>
        <taxon>Saccharomycetales</taxon>
        <taxon>Saccharomycetaceae</taxon>
        <taxon>Saccharomyces</taxon>
    </lineage>
</organism>
<name>DPOG_YEAST</name>
<accession>P15801</accession>
<accession>D6W327</accession>
<accession>Q08785</accession>
<evidence type="ECO:0000256" key="1">
    <source>
        <dbReference type="SAM" id="MobiDB-lite"/>
    </source>
</evidence>
<evidence type="ECO:0000269" key="2">
    <source>
    </source>
</evidence>
<evidence type="ECO:0000305" key="3"/>
<comment type="function">
    <text>Involved in the replication of mitochondrial DNA.</text>
</comment>
<comment type="catalytic activity">
    <reaction>
        <text>DNA(n) + a 2'-deoxyribonucleoside 5'-triphosphate = DNA(n+1) + diphosphate</text>
        <dbReference type="Rhea" id="RHEA:22508"/>
        <dbReference type="Rhea" id="RHEA-COMP:17339"/>
        <dbReference type="Rhea" id="RHEA-COMP:17340"/>
        <dbReference type="ChEBI" id="CHEBI:33019"/>
        <dbReference type="ChEBI" id="CHEBI:61560"/>
        <dbReference type="ChEBI" id="CHEBI:173112"/>
        <dbReference type="EC" id="2.7.7.7"/>
    </reaction>
</comment>
<comment type="cofactor">
    <cofactor>
        <name>Mg(2+)</name>
        <dbReference type="ChEBI" id="CHEBI:18420"/>
    </cofactor>
</comment>
<comment type="subcellular location">
    <subcellularLocation>
        <location>Mitochondrion</location>
    </subcellularLocation>
</comment>
<comment type="miscellaneous">
    <text>In eukaryotes there are five DNA polymerases: alpha, beta, gamma, delta, and epsilon which are responsible for different reactions of DNA synthesis.</text>
</comment>
<comment type="miscellaneous">
    <text evidence="2">Present with 377 molecules/cell in log phase SD medium.</text>
</comment>
<comment type="similarity">
    <text evidence="3">Belongs to the DNA polymerase type-A family.</text>
</comment>
<comment type="sequence caution" evidence="3">
    <conflict type="erroneous initiation">
        <sequence resource="EMBL-CDS" id="CAA99652"/>
    </conflict>
</comment>
<proteinExistence type="evidence at protein level"/>
<reference key="1">
    <citation type="journal article" date="1989" name="J. Biol. Chem.">
        <title>Cloning and sequencing of the nuclear gene MIP1 encoding the catalytic subunit of the yeast mitochondrial DNA polymerase.</title>
        <authorList>
            <person name="Foury F."/>
        </authorList>
    </citation>
    <scope>NUCLEOTIDE SEQUENCE</scope>
</reference>
<reference key="2">
    <citation type="submission" date="1990-06" db="EMBL/GenBank/DDBJ databases">
        <authorList>
            <person name="Foury F."/>
        </authorList>
    </citation>
    <scope>SEQUENCE REVISION</scope>
</reference>
<reference key="3">
    <citation type="journal article" date="1996" name="Yeast">
        <title>Sequence of 29 kb around the PDR10 locus on the right arm of Saccharomyces cerevisiae chromosome XV: similarity to part of chromosome I.</title>
        <authorList>
            <person name="Parle-McDermott A.G."/>
            <person name="Hand N.J."/>
            <person name="Goulding S.E."/>
            <person name="Wolfe K.H."/>
        </authorList>
    </citation>
    <scope>NUCLEOTIDE SEQUENCE [GENOMIC DNA]</scope>
</reference>
<reference key="4">
    <citation type="journal article" date="1997" name="Nature">
        <title>The nucleotide sequence of Saccharomyces cerevisiae chromosome XV.</title>
        <authorList>
            <person name="Dujon B."/>
            <person name="Albermann K."/>
            <person name="Aldea M."/>
            <person name="Alexandraki D."/>
            <person name="Ansorge W."/>
            <person name="Arino J."/>
            <person name="Benes V."/>
            <person name="Bohn C."/>
            <person name="Bolotin-Fukuhara M."/>
            <person name="Bordonne R."/>
            <person name="Boyer J."/>
            <person name="Camasses A."/>
            <person name="Casamayor A."/>
            <person name="Casas C."/>
            <person name="Cheret G."/>
            <person name="Cziepluch C."/>
            <person name="Daignan-Fornier B."/>
            <person name="Dang V.-D."/>
            <person name="de Haan M."/>
            <person name="Delius H."/>
            <person name="Durand P."/>
            <person name="Fairhead C."/>
            <person name="Feldmann H."/>
            <person name="Gaillon L."/>
            <person name="Galisson F."/>
            <person name="Gamo F.-J."/>
            <person name="Gancedo C."/>
            <person name="Goffeau A."/>
            <person name="Goulding S.E."/>
            <person name="Grivell L.A."/>
            <person name="Habbig B."/>
            <person name="Hand N.J."/>
            <person name="Hani J."/>
            <person name="Hattenhorst U."/>
            <person name="Hebling U."/>
            <person name="Hernando Y."/>
            <person name="Herrero E."/>
            <person name="Heumann K."/>
            <person name="Hiesel R."/>
            <person name="Hilger F."/>
            <person name="Hofmann B."/>
            <person name="Hollenberg C.P."/>
            <person name="Hughes B."/>
            <person name="Jauniaux J.-C."/>
            <person name="Kalogeropoulos A."/>
            <person name="Katsoulou C."/>
            <person name="Kordes E."/>
            <person name="Lafuente M.J."/>
            <person name="Landt O."/>
            <person name="Louis E.J."/>
            <person name="Maarse A.C."/>
            <person name="Madania A."/>
            <person name="Mannhaupt G."/>
            <person name="Marck C."/>
            <person name="Martin R.P."/>
            <person name="Mewes H.-W."/>
            <person name="Michaux G."/>
            <person name="Paces V."/>
            <person name="Parle-McDermott A.G."/>
            <person name="Pearson B.M."/>
            <person name="Perrin A."/>
            <person name="Pettersson B."/>
            <person name="Poch O."/>
            <person name="Pohl T.M."/>
            <person name="Poirey R."/>
            <person name="Portetelle D."/>
            <person name="Pujol A."/>
            <person name="Purnelle B."/>
            <person name="Ramezani Rad M."/>
            <person name="Rechmann S."/>
            <person name="Schwager C."/>
            <person name="Schweizer M."/>
            <person name="Sor F."/>
            <person name="Sterky F."/>
            <person name="Tarassov I.A."/>
            <person name="Teodoru C."/>
            <person name="Tettelin H."/>
            <person name="Thierry A."/>
            <person name="Tobiasch E."/>
            <person name="Tzermia M."/>
            <person name="Uhlen M."/>
            <person name="Unseld M."/>
            <person name="Valens M."/>
            <person name="Vandenbol M."/>
            <person name="Vetter I."/>
            <person name="Vlcek C."/>
            <person name="Voet M."/>
            <person name="Volckaert G."/>
            <person name="Voss H."/>
            <person name="Wambutt R."/>
            <person name="Wedler H."/>
            <person name="Wiemann S."/>
            <person name="Winsor B."/>
            <person name="Wolfe K.H."/>
            <person name="Zollner A."/>
            <person name="Zumstein E."/>
            <person name="Kleine K."/>
        </authorList>
    </citation>
    <scope>NUCLEOTIDE SEQUENCE [LARGE SCALE GENOMIC DNA]</scope>
    <source>
        <strain>ATCC 204508 / S288c</strain>
    </source>
</reference>
<reference key="5">
    <citation type="journal article" date="2014" name="G3 (Bethesda)">
        <title>The reference genome sequence of Saccharomyces cerevisiae: Then and now.</title>
        <authorList>
            <person name="Engel S.R."/>
            <person name="Dietrich F.S."/>
            <person name="Fisk D.G."/>
            <person name="Binkley G."/>
            <person name="Balakrishnan R."/>
            <person name="Costanzo M.C."/>
            <person name="Dwight S.S."/>
            <person name="Hitz B.C."/>
            <person name="Karra K."/>
            <person name="Nash R.S."/>
            <person name="Weng S."/>
            <person name="Wong E.D."/>
            <person name="Lloyd P."/>
            <person name="Skrzypek M.S."/>
            <person name="Miyasato S.R."/>
            <person name="Simison M."/>
            <person name="Cherry J.M."/>
        </authorList>
    </citation>
    <scope>GENOME REANNOTATION</scope>
    <source>
        <strain>ATCC 204508 / S288c</strain>
    </source>
</reference>
<reference key="6">
    <citation type="submission" date="1995-12" db="EMBL/GenBank/DDBJ databases">
        <authorList>
            <person name="Song J.M."/>
            <person name="Cheung E."/>
            <person name="Rabinowitz J.C."/>
        </authorList>
    </citation>
    <scope>NUCLEOTIDE SEQUENCE OF 987-1254</scope>
    <source>
        <strain>S288c / GRF88</strain>
    </source>
</reference>
<reference key="7">
    <citation type="journal article" date="2003" name="Nature">
        <title>Global analysis of protein expression in yeast.</title>
        <authorList>
            <person name="Ghaemmaghami S."/>
            <person name="Huh W.-K."/>
            <person name="Bower K."/>
            <person name="Howson R.W."/>
            <person name="Belle A."/>
            <person name="Dephoure N."/>
            <person name="O'Shea E.K."/>
            <person name="Weissman J.S."/>
        </authorList>
    </citation>
    <scope>LEVEL OF PROTEIN EXPRESSION [LARGE SCALE ANALYSIS]</scope>
</reference>
<dbReference type="EC" id="2.7.7.7"/>
<dbReference type="EMBL" id="J05117">
    <property type="protein sequence ID" value="AAA17543.1"/>
    <property type="molecule type" value="Unassigned_DNA"/>
</dbReference>
<dbReference type="EMBL" id="Z49821">
    <property type="protein sequence ID" value="CAA89977.1"/>
    <property type="molecule type" value="Genomic_DNA"/>
</dbReference>
<dbReference type="EMBL" id="Z75238">
    <property type="protein sequence ID" value="CAA99652.1"/>
    <property type="status" value="ALT_INIT"/>
    <property type="molecule type" value="Genomic_DNA"/>
</dbReference>
<dbReference type="EMBL" id="U42227">
    <property type="protein sequence ID" value="AAA85442.1"/>
    <property type="molecule type" value="Genomic_DNA"/>
</dbReference>
<dbReference type="EMBL" id="BK006948">
    <property type="protein sequence ID" value="DAA11093.1"/>
    <property type="molecule type" value="Genomic_DNA"/>
</dbReference>
<dbReference type="PIR" id="S62062">
    <property type="entry name" value="A32686"/>
</dbReference>
<dbReference type="RefSeq" id="NP_014975.2">
    <property type="nucleotide sequence ID" value="NM_001183750.1"/>
</dbReference>
<dbReference type="SMR" id="P15801"/>
<dbReference type="BioGRID" id="34715">
    <property type="interactions" value="166"/>
</dbReference>
<dbReference type="FunCoup" id="P15801">
    <property type="interactions" value="952"/>
</dbReference>
<dbReference type="IntAct" id="P15801">
    <property type="interactions" value="5"/>
</dbReference>
<dbReference type="STRING" id="4932.YOR330C"/>
<dbReference type="GlyGen" id="P15801">
    <property type="glycosylation" value="1 site, 1 O-linked glycan (1 site)"/>
</dbReference>
<dbReference type="iPTMnet" id="P15801"/>
<dbReference type="PaxDb" id="4932-YOR330C"/>
<dbReference type="PeptideAtlas" id="P15801"/>
<dbReference type="EnsemblFungi" id="YOR330C_mRNA">
    <property type="protein sequence ID" value="YOR330C"/>
    <property type="gene ID" value="YOR330C"/>
</dbReference>
<dbReference type="GeneID" id="854508"/>
<dbReference type="KEGG" id="sce:YOR330C"/>
<dbReference type="AGR" id="SGD:S000005857"/>
<dbReference type="SGD" id="S000005857">
    <property type="gene designation" value="MIP1"/>
</dbReference>
<dbReference type="VEuPathDB" id="FungiDB:YOR330C"/>
<dbReference type="eggNOG" id="KOG3657">
    <property type="taxonomic scope" value="Eukaryota"/>
</dbReference>
<dbReference type="GeneTree" id="ENSGT00390000000453"/>
<dbReference type="HOGENOM" id="CLU_001524_2_1_1"/>
<dbReference type="InParanoid" id="P15801"/>
<dbReference type="OMA" id="AMHITNL"/>
<dbReference type="OrthoDB" id="5588663at2759"/>
<dbReference type="BioCyc" id="YEAST:G3O-33807-MONOMER"/>
<dbReference type="BioGRID-ORCS" id="854508">
    <property type="hits" value="8 hits in 10 CRISPR screens"/>
</dbReference>
<dbReference type="PHI-base" id="PHI:505"/>
<dbReference type="PRO" id="PR:P15801"/>
<dbReference type="Proteomes" id="UP000002311">
    <property type="component" value="Chromosome XV"/>
</dbReference>
<dbReference type="RNAct" id="P15801">
    <property type="molecule type" value="protein"/>
</dbReference>
<dbReference type="GO" id="GO:0005760">
    <property type="term" value="C:gamma DNA polymerase complex"/>
    <property type="evidence" value="ECO:0007669"/>
    <property type="project" value="InterPro"/>
</dbReference>
<dbReference type="GO" id="GO:0005739">
    <property type="term" value="C:mitochondrion"/>
    <property type="evidence" value="ECO:0000314"/>
    <property type="project" value="SGD"/>
</dbReference>
<dbReference type="GO" id="GO:0008408">
    <property type="term" value="F:3'-5' exonuclease activity"/>
    <property type="evidence" value="ECO:0000314"/>
    <property type="project" value="SGD"/>
</dbReference>
<dbReference type="GO" id="GO:0003677">
    <property type="term" value="F:DNA binding"/>
    <property type="evidence" value="ECO:0007669"/>
    <property type="project" value="UniProtKB-KW"/>
</dbReference>
<dbReference type="GO" id="GO:0003887">
    <property type="term" value="F:DNA-directed DNA polymerase activity"/>
    <property type="evidence" value="ECO:0000314"/>
    <property type="project" value="SGD"/>
</dbReference>
<dbReference type="GO" id="GO:0006995">
    <property type="term" value="P:cellular response to nitrogen starvation"/>
    <property type="evidence" value="ECO:0000315"/>
    <property type="project" value="SGD"/>
</dbReference>
<dbReference type="GO" id="GO:0032043">
    <property type="term" value="P:mitochondrial DNA catabolic process"/>
    <property type="evidence" value="ECO:0000315"/>
    <property type="project" value="SGD"/>
</dbReference>
<dbReference type="GO" id="GO:0006264">
    <property type="term" value="P:mitochondrial DNA replication"/>
    <property type="evidence" value="ECO:0000314"/>
    <property type="project" value="SGD"/>
</dbReference>
<dbReference type="GO" id="GO:0000002">
    <property type="term" value="P:mitochondrial genome maintenance"/>
    <property type="evidence" value="ECO:0000315"/>
    <property type="project" value="SGD"/>
</dbReference>
<dbReference type="CDD" id="cd08641">
    <property type="entry name" value="DNA_pol_gammaA"/>
    <property type="match status" value="1"/>
</dbReference>
<dbReference type="FunFam" id="3.30.420.390:FF:000007">
    <property type="entry name" value="DNA polymerase gamma"/>
    <property type="match status" value="1"/>
</dbReference>
<dbReference type="FunFam" id="1.10.150.20:FF:000035">
    <property type="entry name" value="DNA polymerase gamma, mitochondrial"/>
    <property type="match status" value="1"/>
</dbReference>
<dbReference type="FunFam" id="3.30.420.390:FF:000003">
    <property type="entry name" value="DNA polymerase gamma, mitochondrial"/>
    <property type="match status" value="1"/>
</dbReference>
<dbReference type="Gene3D" id="3.30.420.390">
    <property type="match status" value="1"/>
</dbReference>
<dbReference type="Gene3D" id="3.30.70.370">
    <property type="match status" value="1"/>
</dbReference>
<dbReference type="Gene3D" id="1.10.150.20">
    <property type="entry name" value="5' to 3' exonuclease, C-terminal subdomain"/>
    <property type="match status" value="1"/>
</dbReference>
<dbReference type="InterPro" id="IPR019760">
    <property type="entry name" value="DNA-dir_DNA_pol_A_CS"/>
</dbReference>
<dbReference type="InterPro" id="IPR002297">
    <property type="entry name" value="DNA-dir_DNA_pol_A_mt"/>
</dbReference>
<dbReference type="InterPro" id="IPR001098">
    <property type="entry name" value="DNA-dir_DNA_pol_A_palm_dom"/>
</dbReference>
<dbReference type="InterPro" id="IPR043502">
    <property type="entry name" value="DNA/RNA_pol_sf"/>
</dbReference>
<dbReference type="InterPro" id="IPR041336">
    <property type="entry name" value="DNApol_Exo"/>
</dbReference>
<dbReference type="InterPro" id="IPR047580">
    <property type="entry name" value="POLG_palm_dom"/>
</dbReference>
<dbReference type="InterPro" id="IPR012337">
    <property type="entry name" value="RNaseH-like_sf"/>
</dbReference>
<dbReference type="PANTHER" id="PTHR10267">
    <property type="entry name" value="DNA POLYMERASE SUBUNIT GAMMA-1"/>
    <property type="match status" value="1"/>
</dbReference>
<dbReference type="PANTHER" id="PTHR10267:SF0">
    <property type="entry name" value="DNA POLYMERASE SUBUNIT GAMMA-1"/>
    <property type="match status" value="1"/>
</dbReference>
<dbReference type="Pfam" id="PF00476">
    <property type="entry name" value="DNA_pol_A"/>
    <property type="match status" value="1"/>
</dbReference>
<dbReference type="Pfam" id="PF18136">
    <property type="entry name" value="DNApol_Exo"/>
    <property type="match status" value="1"/>
</dbReference>
<dbReference type="PIRSF" id="PIRSF000797">
    <property type="entry name" value="DNA_pol_mt"/>
    <property type="match status" value="1"/>
</dbReference>
<dbReference type="PRINTS" id="PR00867">
    <property type="entry name" value="DNAPOLG"/>
</dbReference>
<dbReference type="SMART" id="SM00482">
    <property type="entry name" value="POLAc"/>
    <property type="match status" value="1"/>
</dbReference>
<dbReference type="SUPFAM" id="SSF56672">
    <property type="entry name" value="DNA/RNA polymerases"/>
    <property type="match status" value="1"/>
</dbReference>
<dbReference type="SUPFAM" id="SSF53098">
    <property type="entry name" value="Ribonuclease H-like"/>
    <property type="match status" value="1"/>
</dbReference>
<dbReference type="PROSITE" id="PS00447">
    <property type="entry name" value="DNA_POLYMERASE_A"/>
    <property type="match status" value="1"/>
</dbReference>
<protein>
    <recommendedName>
        <fullName>DNA polymerase gamma</fullName>
        <ecNumber>2.7.7.7</ecNumber>
    </recommendedName>
    <alternativeName>
        <fullName>Mitochondrial DNA polymerase catalytic subunit</fullName>
    </alternativeName>
</protein>
<feature type="chain" id="PRO_0000101278" description="DNA polymerase gamma">
    <location>
        <begin position="1"/>
        <end position="1254"/>
    </location>
</feature>
<feature type="region of interest" description="Disordered" evidence="1">
    <location>
        <begin position="1125"/>
        <end position="1145"/>
    </location>
</feature>
<feature type="region of interest" description="Disordered" evidence="1">
    <location>
        <begin position="1202"/>
        <end position="1240"/>
    </location>
</feature>
<feature type="compositionally biased region" description="Basic and acidic residues" evidence="1">
    <location>
        <begin position="1125"/>
        <end position="1137"/>
    </location>
</feature>
<feature type="compositionally biased region" description="Polar residues" evidence="1">
    <location>
        <begin position="1208"/>
        <end position="1217"/>
    </location>
</feature>
<feature type="compositionally biased region" description="Basic residues" evidence="1">
    <location>
        <begin position="1219"/>
        <end position="1231"/>
    </location>
</feature>
<feature type="sequence conflict" description="In Ref. 1; AAA17543." evidence="3" ref="1">
    <original>S</original>
    <variation>F</variation>
    <location>
        <position position="8"/>
    </location>
</feature>
<feature type="sequence conflict" description="In Ref. 1; AAA17543." evidence="3" ref="1">
    <original>T</original>
    <variation>A</variation>
    <location>
        <position position="35"/>
    </location>
</feature>
<feature type="sequence conflict" description="In Ref. 1; AAA17543." evidence="3" ref="1">
    <original>I</original>
    <variation>V</variation>
    <location>
        <position position="222"/>
    </location>
</feature>
<feature type="sequence conflict" description="In Ref. 1; AAA17543." evidence="3" ref="1">
    <original>E</original>
    <variation>K</variation>
    <location>
        <position position="357"/>
    </location>
</feature>
<feature type="sequence conflict" description="In Ref. 1; AAA17543." evidence="3" ref="1">
    <original>TH</original>
    <variation>MN</variation>
    <location>
        <begin position="540"/>
        <end position="541"/>
    </location>
</feature>
<feature type="sequence conflict" description="In Ref. 1; AAA17543." evidence="3" ref="1">
    <original>S</original>
    <variation>N</variation>
    <location>
        <position position="616"/>
    </location>
</feature>
<feature type="sequence conflict" description="In Ref. 1; AAA17543." evidence="3" ref="1">
    <original>A</original>
    <variation>T</variation>
    <location>
        <position position="661"/>
    </location>
</feature>
<feature type="sequence conflict" description="In Ref. 1; AAA17543." evidence="3" ref="1">
    <original>S</original>
    <variation>P</variation>
    <location>
        <position position="978"/>
    </location>
</feature>
<feature type="sequence conflict" description="In Ref. 1; AAA17543." evidence="3" ref="1">
    <original>N</original>
    <variation>S</variation>
    <location>
        <position position="986"/>
    </location>
</feature>
<keyword id="KW-0235">DNA replication</keyword>
<keyword id="KW-0238">DNA-binding</keyword>
<keyword id="KW-0239">DNA-directed DNA polymerase</keyword>
<keyword id="KW-0460">Magnesium</keyword>
<keyword id="KW-0496">Mitochondrion</keyword>
<keyword id="KW-0548">Nucleotidyltransferase</keyword>
<keyword id="KW-1185">Reference proteome</keyword>
<keyword id="KW-0808">Transferase</keyword>
<gene>
    <name type="primary">MIP1</name>
    <name type="ordered locus">YOR330C</name>
</gene>